<dbReference type="EC" id="3.5.2.9" evidence="1"/>
<dbReference type="EMBL" id="BA000018">
    <property type="protein sequence ID" value="BAB42697.1"/>
    <property type="molecule type" value="Genomic_DNA"/>
</dbReference>
<dbReference type="PIR" id="D89942">
    <property type="entry name" value="D89942"/>
</dbReference>
<dbReference type="RefSeq" id="WP_001261793.1">
    <property type="nucleotide sequence ID" value="NC_002745.2"/>
</dbReference>
<dbReference type="SMR" id="P67623"/>
<dbReference type="EnsemblBacteria" id="BAB42697">
    <property type="protein sequence ID" value="BAB42697"/>
    <property type="gene ID" value="BAB42697"/>
</dbReference>
<dbReference type="KEGG" id="sau:SA1433"/>
<dbReference type="HOGENOM" id="CLU_069535_0_0_9"/>
<dbReference type="GO" id="GO:0017168">
    <property type="term" value="F:5-oxoprolinase (ATP-hydrolyzing) activity"/>
    <property type="evidence" value="ECO:0007669"/>
    <property type="project" value="UniProtKB-UniRule"/>
</dbReference>
<dbReference type="GO" id="GO:0005524">
    <property type="term" value="F:ATP binding"/>
    <property type="evidence" value="ECO:0007669"/>
    <property type="project" value="UniProtKB-UniRule"/>
</dbReference>
<dbReference type="GO" id="GO:0005975">
    <property type="term" value="P:carbohydrate metabolic process"/>
    <property type="evidence" value="ECO:0007669"/>
    <property type="project" value="InterPro"/>
</dbReference>
<dbReference type="CDD" id="cd10787">
    <property type="entry name" value="LamB_YcsF_like"/>
    <property type="match status" value="1"/>
</dbReference>
<dbReference type="Gene3D" id="3.20.20.370">
    <property type="entry name" value="Glycoside hydrolase/deacetylase"/>
    <property type="match status" value="1"/>
</dbReference>
<dbReference type="HAMAP" id="MF_00691">
    <property type="entry name" value="PxpA"/>
    <property type="match status" value="1"/>
</dbReference>
<dbReference type="InterPro" id="IPR011330">
    <property type="entry name" value="Glyco_hydro/deAcase_b/a-brl"/>
</dbReference>
<dbReference type="InterPro" id="IPR005501">
    <property type="entry name" value="LamB/YcsF/PxpA-like"/>
</dbReference>
<dbReference type="NCBIfam" id="NF003813">
    <property type="entry name" value="PRK05406.1-2"/>
    <property type="match status" value="1"/>
</dbReference>
<dbReference type="NCBIfam" id="NF003814">
    <property type="entry name" value="PRK05406.1-3"/>
    <property type="match status" value="1"/>
</dbReference>
<dbReference type="NCBIfam" id="NF003816">
    <property type="entry name" value="PRK05406.1-5"/>
    <property type="match status" value="1"/>
</dbReference>
<dbReference type="PANTHER" id="PTHR30292:SF0">
    <property type="entry name" value="5-OXOPROLINASE SUBUNIT A"/>
    <property type="match status" value="1"/>
</dbReference>
<dbReference type="PANTHER" id="PTHR30292">
    <property type="entry name" value="UNCHARACTERIZED PROTEIN YBGL-RELATED"/>
    <property type="match status" value="1"/>
</dbReference>
<dbReference type="Pfam" id="PF03746">
    <property type="entry name" value="LamB_YcsF"/>
    <property type="match status" value="1"/>
</dbReference>
<dbReference type="SUPFAM" id="SSF88713">
    <property type="entry name" value="Glycoside hydrolase/deacetylase"/>
    <property type="match status" value="1"/>
</dbReference>
<reference key="1">
    <citation type="journal article" date="2001" name="Lancet">
        <title>Whole genome sequencing of meticillin-resistant Staphylococcus aureus.</title>
        <authorList>
            <person name="Kuroda M."/>
            <person name="Ohta T."/>
            <person name="Uchiyama I."/>
            <person name="Baba T."/>
            <person name="Yuzawa H."/>
            <person name="Kobayashi I."/>
            <person name="Cui L."/>
            <person name="Oguchi A."/>
            <person name="Aoki K."/>
            <person name="Nagai Y."/>
            <person name="Lian J.-Q."/>
            <person name="Ito T."/>
            <person name="Kanamori M."/>
            <person name="Matsumaru H."/>
            <person name="Maruyama A."/>
            <person name="Murakami H."/>
            <person name="Hosoyama A."/>
            <person name="Mizutani-Ui Y."/>
            <person name="Takahashi N.K."/>
            <person name="Sawano T."/>
            <person name="Inoue R."/>
            <person name="Kaito C."/>
            <person name="Sekimizu K."/>
            <person name="Hirakawa H."/>
            <person name="Kuhara S."/>
            <person name="Goto S."/>
            <person name="Yabuzaki J."/>
            <person name="Kanehisa M."/>
            <person name="Yamashita A."/>
            <person name="Oshima K."/>
            <person name="Furuya K."/>
            <person name="Yoshino C."/>
            <person name="Shiba T."/>
            <person name="Hattori M."/>
            <person name="Ogasawara N."/>
            <person name="Hayashi H."/>
            <person name="Hiramatsu K."/>
        </authorList>
    </citation>
    <scope>NUCLEOTIDE SEQUENCE [LARGE SCALE GENOMIC DNA]</scope>
    <source>
        <strain>N315</strain>
    </source>
</reference>
<organism>
    <name type="scientific">Staphylococcus aureus (strain N315)</name>
    <dbReference type="NCBI Taxonomy" id="158879"/>
    <lineage>
        <taxon>Bacteria</taxon>
        <taxon>Bacillati</taxon>
        <taxon>Bacillota</taxon>
        <taxon>Bacilli</taxon>
        <taxon>Bacillales</taxon>
        <taxon>Staphylococcaceae</taxon>
        <taxon>Staphylococcus</taxon>
    </lineage>
</organism>
<name>PXPA_STAAN</name>
<sequence>MRVDLNCDLGEAFGNYSFGGDHQIIPLITSANVACGFHAGDENVMNETVKLAKAHNVAVGAHPGLPDLKGFGRRNIDISNDEIYNLMIYQLGALQGFCRIHQLKINHVKPHGALYQMGAKDREIANVIAQAVYDFDPSLVLVGLANSYLISEAKNVGLITASEVFADRRYEDDGQLVSRKESDAVITDTDEALKQVLKMVKENKVISKNNKEVTLQADTICVHGDGEHALLFVSKIREILMKEGIDIQSL</sequence>
<keyword id="KW-0067">ATP-binding</keyword>
<keyword id="KW-0378">Hydrolase</keyword>
<keyword id="KW-0547">Nucleotide-binding</keyword>
<gene>
    <name evidence="1" type="primary">pxpA</name>
    <name type="ordered locus">SA1433</name>
</gene>
<comment type="function">
    <text evidence="1">Catalyzes the cleavage of 5-oxoproline to form L-glutamate coupled to the hydrolysis of ATP to ADP and inorganic phosphate.</text>
</comment>
<comment type="catalytic activity">
    <reaction evidence="1">
        <text>5-oxo-L-proline + ATP + 2 H2O = L-glutamate + ADP + phosphate + H(+)</text>
        <dbReference type="Rhea" id="RHEA:10348"/>
        <dbReference type="ChEBI" id="CHEBI:15377"/>
        <dbReference type="ChEBI" id="CHEBI:15378"/>
        <dbReference type="ChEBI" id="CHEBI:29985"/>
        <dbReference type="ChEBI" id="CHEBI:30616"/>
        <dbReference type="ChEBI" id="CHEBI:43474"/>
        <dbReference type="ChEBI" id="CHEBI:58402"/>
        <dbReference type="ChEBI" id="CHEBI:456216"/>
        <dbReference type="EC" id="3.5.2.9"/>
    </reaction>
</comment>
<comment type="subunit">
    <text evidence="1">Forms a complex composed of PxpA, PxpB and PxpC.</text>
</comment>
<comment type="similarity">
    <text evidence="1">Belongs to the LamB/PxpA family.</text>
</comment>
<accession>P67623</accession>
<accession>Q99TP4</accession>
<evidence type="ECO:0000255" key="1">
    <source>
        <dbReference type="HAMAP-Rule" id="MF_00691"/>
    </source>
</evidence>
<feature type="chain" id="PRO_0000185045" description="5-oxoprolinase subunit A">
    <location>
        <begin position="1"/>
        <end position="250"/>
    </location>
</feature>
<protein>
    <recommendedName>
        <fullName evidence="1">5-oxoprolinase subunit A</fullName>
        <shortName evidence="1">5-OPase subunit A</shortName>
        <ecNumber evidence="1">3.5.2.9</ecNumber>
    </recommendedName>
    <alternativeName>
        <fullName evidence="1">5-oxoprolinase (ATP-hydrolyzing) subunit A</fullName>
    </alternativeName>
</protein>
<proteinExistence type="inferred from homology"/>